<accession>B5ZNL9</accession>
<name>TOLB_RHILW</name>
<feature type="signal peptide" evidence="1">
    <location>
        <begin position="1"/>
        <end position="28"/>
    </location>
</feature>
<feature type="chain" id="PRO_5000403657" description="Tol-Pal system protein TolB" evidence="1">
    <location>
        <begin position="29"/>
        <end position="435"/>
    </location>
</feature>
<feature type="region of interest" description="Disordered" evidence="2">
    <location>
        <begin position="288"/>
        <end position="310"/>
    </location>
</feature>
<proteinExistence type="inferred from homology"/>
<gene>
    <name evidence="1" type="primary">tolB</name>
    <name type="ordered locus">Rleg2_3200</name>
</gene>
<comment type="function">
    <text evidence="1">Part of the Tol-Pal system, which plays a role in outer membrane invagination during cell division and is important for maintaining outer membrane integrity.</text>
</comment>
<comment type="subunit">
    <text evidence="1">The Tol-Pal system is composed of five core proteins: the inner membrane proteins TolA, TolQ and TolR, the periplasmic protein TolB and the outer membrane protein Pal. They form a network linking the inner and outer membranes and the peptidoglycan layer.</text>
</comment>
<comment type="subcellular location">
    <subcellularLocation>
        <location evidence="1">Periplasm</location>
    </subcellularLocation>
</comment>
<comment type="similarity">
    <text evidence="1">Belongs to the TolB family.</text>
</comment>
<reference key="1">
    <citation type="journal article" date="2010" name="Stand. Genomic Sci.">
        <title>Complete genome sequence of Rhizobium leguminosarum bv trifolii strain WSM2304, an effective microsymbiont of the South American clover Trifolium polymorphum.</title>
        <authorList>
            <person name="Reeve W."/>
            <person name="O'Hara G."/>
            <person name="Chain P."/>
            <person name="Ardley J."/>
            <person name="Brau L."/>
            <person name="Nandesena K."/>
            <person name="Tiwari R."/>
            <person name="Malfatti S."/>
            <person name="Kiss H."/>
            <person name="Lapidus A."/>
            <person name="Copeland A."/>
            <person name="Nolan M."/>
            <person name="Land M."/>
            <person name="Ivanova N."/>
            <person name="Mavromatis K."/>
            <person name="Markowitz V."/>
            <person name="Kyrpides N."/>
            <person name="Melino V."/>
            <person name="Denton M."/>
            <person name="Yates R."/>
            <person name="Howieson J."/>
        </authorList>
    </citation>
    <scope>NUCLEOTIDE SEQUENCE [LARGE SCALE GENOMIC DNA]</scope>
    <source>
        <strain>WSM2304</strain>
    </source>
</reference>
<sequence length="435" mass="47778">MVKCSLIRALMVIAGLIGAAAFTTPANALVTLDLRKGNVQPMPIAVTDFQGDLGAQVSQVIAADLQRSGLFAPINKTAFIEKISNPDAAPRFEDWKVINAQALVTGRVTKEADGRLRAEFRLWDPFAGQQMTGQQFYTQPENWRRVAHIIADAIYKQITGEEGYFDTRVVFVSESGTKQQRKRQLAIMDQDGFNVRMLTDGSDLVLTPRFSPSRQEVTYMSFANQQPRVYLLQLETGQREVVGNFPGMTFSPRFSPDGQKVIMSLQQDANSNIYTMDLRSRTTTRLTSTAAIDTSPSYSPDGARVSFESDRGGKPQIYVMNADGSGQTRISFGDGSYSTPVWSPRGDLIAFTKQAGGKFSIGVMKPDGSGERILTTGFHNEGPTWAPNGRVLMFFRQAAGAGGPQLYSIDLTGYNEQLVKTPSYGSDPAWSPLME</sequence>
<evidence type="ECO:0000255" key="1">
    <source>
        <dbReference type="HAMAP-Rule" id="MF_00671"/>
    </source>
</evidence>
<evidence type="ECO:0000256" key="2">
    <source>
        <dbReference type="SAM" id="MobiDB-lite"/>
    </source>
</evidence>
<dbReference type="EMBL" id="CP001191">
    <property type="protein sequence ID" value="ACI56467.1"/>
    <property type="molecule type" value="Genomic_DNA"/>
</dbReference>
<dbReference type="RefSeq" id="WP_012558839.1">
    <property type="nucleotide sequence ID" value="NC_011369.1"/>
</dbReference>
<dbReference type="SMR" id="B5ZNL9"/>
<dbReference type="STRING" id="395492.Rleg2_3200"/>
<dbReference type="KEGG" id="rlt:Rleg2_3200"/>
<dbReference type="eggNOG" id="COG0823">
    <property type="taxonomic scope" value="Bacteria"/>
</dbReference>
<dbReference type="HOGENOM" id="CLU_047123_0_0_5"/>
<dbReference type="Proteomes" id="UP000008330">
    <property type="component" value="Chromosome"/>
</dbReference>
<dbReference type="GO" id="GO:0042597">
    <property type="term" value="C:periplasmic space"/>
    <property type="evidence" value="ECO:0007669"/>
    <property type="project" value="UniProtKB-SubCell"/>
</dbReference>
<dbReference type="GO" id="GO:0051301">
    <property type="term" value="P:cell division"/>
    <property type="evidence" value="ECO:0007669"/>
    <property type="project" value="UniProtKB-UniRule"/>
</dbReference>
<dbReference type="GO" id="GO:0017038">
    <property type="term" value="P:protein import"/>
    <property type="evidence" value="ECO:0007669"/>
    <property type="project" value="InterPro"/>
</dbReference>
<dbReference type="Gene3D" id="2.120.10.30">
    <property type="entry name" value="TolB, C-terminal domain"/>
    <property type="match status" value="1"/>
</dbReference>
<dbReference type="Gene3D" id="3.40.50.10070">
    <property type="entry name" value="TolB, N-terminal domain"/>
    <property type="match status" value="1"/>
</dbReference>
<dbReference type="HAMAP" id="MF_00671">
    <property type="entry name" value="TolB"/>
    <property type="match status" value="1"/>
</dbReference>
<dbReference type="InterPro" id="IPR011042">
    <property type="entry name" value="6-blade_b-propeller_TolB-like"/>
</dbReference>
<dbReference type="InterPro" id="IPR011659">
    <property type="entry name" value="PD40"/>
</dbReference>
<dbReference type="InterPro" id="IPR014167">
    <property type="entry name" value="Tol-Pal_TolB"/>
</dbReference>
<dbReference type="InterPro" id="IPR007195">
    <property type="entry name" value="TolB_N"/>
</dbReference>
<dbReference type="NCBIfam" id="TIGR02800">
    <property type="entry name" value="propeller_TolB"/>
    <property type="match status" value="1"/>
</dbReference>
<dbReference type="PANTHER" id="PTHR36842:SF1">
    <property type="entry name" value="PROTEIN TOLB"/>
    <property type="match status" value="1"/>
</dbReference>
<dbReference type="PANTHER" id="PTHR36842">
    <property type="entry name" value="PROTEIN TOLB HOMOLOG"/>
    <property type="match status" value="1"/>
</dbReference>
<dbReference type="Pfam" id="PF07676">
    <property type="entry name" value="PD40"/>
    <property type="match status" value="3"/>
</dbReference>
<dbReference type="Pfam" id="PF04052">
    <property type="entry name" value="TolB_N"/>
    <property type="match status" value="1"/>
</dbReference>
<dbReference type="SUPFAM" id="SSF52964">
    <property type="entry name" value="TolB, N-terminal domain"/>
    <property type="match status" value="1"/>
</dbReference>
<dbReference type="SUPFAM" id="SSF69304">
    <property type="entry name" value="Tricorn protease N-terminal domain"/>
    <property type="match status" value="1"/>
</dbReference>
<keyword id="KW-0131">Cell cycle</keyword>
<keyword id="KW-0132">Cell division</keyword>
<keyword id="KW-0574">Periplasm</keyword>
<keyword id="KW-1185">Reference proteome</keyword>
<keyword id="KW-0732">Signal</keyword>
<protein>
    <recommendedName>
        <fullName evidence="1">Tol-Pal system protein TolB</fullName>
    </recommendedName>
</protein>
<organism>
    <name type="scientific">Rhizobium leguminosarum bv. trifolii (strain WSM2304)</name>
    <dbReference type="NCBI Taxonomy" id="395492"/>
    <lineage>
        <taxon>Bacteria</taxon>
        <taxon>Pseudomonadati</taxon>
        <taxon>Pseudomonadota</taxon>
        <taxon>Alphaproteobacteria</taxon>
        <taxon>Hyphomicrobiales</taxon>
        <taxon>Rhizobiaceae</taxon>
        <taxon>Rhizobium/Agrobacterium group</taxon>
        <taxon>Rhizobium</taxon>
    </lineage>
</organism>